<sequence>MNPIVEFCVNNLASGADAAFAKLDADDSLDVIEYDCLTYCDLCATSLFALVDGEVVRGETADELVANIYTFLEENPF</sequence>
<name>Y2340_LISW6</name>
<feature type="chain" id="PRO_0000300204" description="UPF0349 protein lwe2340">
    <location>
        <begin position="1"/>
        <end position="77"/>
    </location>
</feature>
<protein>
    <recommendedName>
        <fullName evidence="1">UPF0349 protein lwe2340</fullName>
    </recommendedName>
</protein>
<evidence type="ECO:0000255" key="1">
    <source>
        <dbReference type="HAMAP-Rule" id="MF_01542"/>
    </source>
</evidence>
<organism>
    <name type="scientific">Listeria welshimeri serovar 6b (strain ATCC 35897 / DSM 20650 / CCUG 15529 / CIP 8149 / NCTC 11857 / SLCC 5334 / V8)</name>
    <dbReference type="NCBI Taxonomy" id="386043"/>
    <lineage>
        <taxon>Bacteria</taxon>
        <taxon>Bacillati</taxon>
        <taxon>Bacillota</taxon>
        <taxon>Bacilli</taxon>
        <taxon>Bacillales</taxon>
        <taxon>Listeriaceae</taxon>
        <taxon>Listeria</taxon>
    </lineage>
</organism>
<dbReference type="EMBL" id="AM263198">
    <property type="protein sequence ID" value="CAK21758.1"/>
    <property type="molecule type" value="Genomic_DNA"/>
</dbReference>
<dbReference type="RefSeq" id="WP_011703083.1">
    <property type="nucleotide sequence ID" value="NC_008555.1"/>
</dbReference>
<dbReference type="SMR" id="A0AL76"/>
<dbReference type="STRING" id="386043.lwe2340"/>
<dbReference type="GeneID" id="61190262"/>
<dbReference type="KEGG" id="lwe:lwe2340"/>
<dbReference type="eggNOG" id="COG4844">
    <property type="taxonomic scope" value="Bacteria"/>
</dbReference>
<dbReference type="HOGENOM" id="CLU_182025_0_0_9"/>
<dbReference type="OrthoDB" id="1684419at2"/>
<dbReference type="Proteomes" id="UP000000779">
    <property type="component" value="Chromosome"/>
</dbReference>
<dbReference type="HAMAP" id="MF_01542">
    <property type="entry name" value="UPF0349"/>
    <property type="match status" value="1"/>
</dbReference>
<dbReference type="InterPro" id="IPR009910">
    <property type="entry name" value="DUF1450"/>
</dbReference>
<dbReference type="InterPro" id="IPR022916">
    <property type="entry name" value="UPF0349"/>
</dbReference>
<dbReference type="NCBIfam" id="NF010190">
    <property type="entry name" value="PRK13669.1"/>
    <property type="match status" value="1"/>
</dbReference>
<dbReference type="Pfam" id="PF07293">
    <property type="entry name" value="DUF1450"/>
    <property type="match status" value="1"/>
</dbReference>
<comment type="similarity">
    <text evidence="1">Belongs to the UPF0349 family.</text>
</comment>
<reference key="1">
    <citation type="journal article" date="2006" name="J. Bacteriol.">
        <title>Whole-genome sequence of Listeria welshimeri reveals common steps in genome reduction with Listeria innocua as compared to Listeria monocytogenes.</title>
        <authorList>
            <person name="Hain T."/>
            <person name="Steinweg C."/>
            <person name="Kuenne C.T."/>
            <person name="Billion A."/>
            <person name="Ghai R."/>
            <person name="Chatterjee S.S."/>
            <person name="Domann E."/>
            <person name="Kaerst U."/>
            <person name="Goesmann A."/>
            <person name="Bekel T."/>
            <person name="Bartels D."/>
            <person name="Kaiser O."/>
            <person name="Meyer F."/>
            <person name="Puehler A."/>
            <person name="Weisshaar B."/>
            <person name="Wehland J."/>
            <person name="Liang C."/>
            <person name="Dandekar T."/>
            <person name="Lampidis R."/>
            <person name="Kreft J."/>
            <person name="Goebel W."/>
            <person name="Chakraborty T."/>
        </authorList>
    </citation>
    <scope>NUCLEOTIDE SEQUENCE [LARGE SCALE GENOMIC DNA]</scope>
    <source>
        <strain>ATCC 35897 / DSM 20650 / CCUG 15529 / CIP 8149 / NCTC 11857 / SLCC 5334 / V8</strain>
    </source>
</reference>
<accession>A0AL76</accession>
<gene>
    <name type="ordered locus">lwe2340</name>
</gene>
<proteinExistence type="inferred from homology"/>